<gene>
    <name type="primary">CYB561</name>
</gene>
<evidence type="ECO:0000250" key="1">
    <source>
        <dbReference type="UniProtKB" id="P10897"/>
    </source>
</evidence>
<evidence type="ECO:0000250" key="2">
    <source>
        <dbReference type="UniProtKB" id="Q53TN4"/>
    </source>
</evidence>
<evidence type="ECO:0000250" key="3">
    <source>
        <dbReference type="UniProtKB" id="Q60720"/>
    </source>
</evidence>
<evidence type="ECO:0000255" key="4"/>
<evidence type="ECO:0000255" key="5">
    <source>
        <dbReference type="PROSITE-ProRule" id="PRU00242"/>
    </source>
</evidence>
<evidence type="ECO:0000305" key="6"/>
<feature type="chain" id="PRO_0000151029" description="Transmembrane ascorbate-dependent reductase CYB561">
    <location>
        <begin position="1"/>
        <end position="252"/>
    </location>
</feature>
<feature type="topological domain" description="Cytoplasmic" evidence="2">
    <location>
        <begin position="1"/>
        <end position="17"/>
    </location>
</feature>
<feature type="transmembrane region" description="Helical" evidence="4">
    <location>
        <begin position="18"/>
        <end position="38"/>
    </location>
</feature>
<feature type="topological domain" description="Vesicular" evidence="2">
    <location>
        <begin position="39"/>
        <end position="52"/>
    </location>
</feature>
<feature type="transmembrane region" description="Helical" evidence="4">
    <location>
        <begin position="53"/>
        <end position="73"/>
    </location>
</feature>
<feature type="topological domain" description="Cytoplasmic" evidence="2">
    <location>
        <begin position="74"/>
        <end position="85"/>
    </location>
</feature>
<feature type="transmembrane region" description="Helical" evidence="4">
    <location>
        <begin position="86"/>
        <end position="106"/>
    </location>
</feature>
<feature type="topological domain" description="Vesicular" evidence="2">
    <location>
        <begin position="107"/>
        <end position="125"/>
    </location>
</feature>
<feature type="transmembrane region" description="Helical" evidence="4">
    <location>
        <begin position="126"/>
        <end position="146"/>
    </location>
</feature>
<feature type="topological domain" description="Cytoplasmic" evidence="2">
    <location>
        <begin position="147"/>
        <end position="159"/>
    </location>
</feature>
<feature type="transmembrane region" description="Helical" evidence="4">
    <location>
        <begin position="160"/>
        <end position="180"/>
    </location>
</feature>
<feature type="topological domain" description="Vesicular" evidence="2">
    <location>
        <begin position="181"/>
        <end position="199"/>
    </location>
</feature>
<feature type="transmembrane region" description="Helical" evidence="4">
    <location>
        <begin position="200"/>
        <end position="220"/>
    </location>
</feature>
<feature type="topological domain" description="Cytoplasmic" evidence="2">
    <location>
        <begin position="221"/>
        <end position="252"/>
    </location>
</feature>
<feature type="domain" description="Cytochrome b561" evidence="5">
    <location>
        <begin position="20"/>
        <end position="221"/>
    </location>
</feature>
<feature type="binding site" description="axial binding residue" evidence="2">
    <location>
        <position position="54"/>
    </location>
    <ligand>
        <name>heme b</name>
        <dbReference type="ChEBI" id="CHEBI:60344"/>
        <label>1</label>
    </ligand>
    <ligandPart>
        <name>Fe</name>
        <dbReference type="ChEBI" id="CHEBI:18248"/>
    </ligandPart>
</feature>
<feature type="binding site" evidence="2">
    <location>
        <position position="74"/>
    </location>
    <ligand>
        <name>heme b</name>
        <dbReference type="ChEBI" id="CHEBI:60344"/>
        <label>2</label>
    </ligand>
</feature>
<feature type="binding site" evidence="2">
    <location>
        <position position="81"/>
    </location>
    <ligand>
        <name>heme b</name>
        <dbReference type="ChEBI" id="CHEBI:60344"/>
        <label>2</label>
    </ligand>
</feature>
<feature type="binding site" evidence="2">
    <location>
        <position position="81"/>
    </location>
    <ligand>
        <name>L-ascorbate</name>
        <dbReference type="ChEBI" id="CHEBI:38290"/>
    </ligand>
</feature>
<feature type="binding site" evidence="2">
    <location>
        <position position="85"/>
    </location>
    <ligand>
        <name>L-ascorbate</name>
        <dbReference type="ChEBI" id="CHEBI:38290"/>
    </ligand>
</feature>
<feature type="binding site" description="axial binding residue" evidence="2">
    <location>
        <position position="88"/>
    </location>
    <ligand>
        <name>heme b</name>
        <dbReference type="ChEBI" id="CHEBI:60344"/>
        <label>2</label>
    </ligand>
    <ligandPart>
        <name>Fe</name>
        <dbReference type="ChEBI" id="CHEBI:18248"/>
    </ligandPart>
</feature>
<feature type="binding site" evidence="2">
    <location>
        <begin position="117"/>
        <end position="120"/>
    </location>
    <ligand>
        <name>heme b</name>
        <dbReference type="ChEBI" id="CHEBI:60344"/>
        <label>1</label>
    </ligand>
</feature>
<feature type="binding site" description="axial binding residue" evidence="2">
    <location>
        <position position="122"/>
    </location>
    <ligand>
        <name>heme b</name>
        <dbReference type="ChEBI" id="CHEBI:60344"/>
        <label>1</label>
    </ligand>
    <ligandPart>
        <name>Fe</name>
        <dbReference type="ChEBI" id="CHEBI:18248"/>
    </ligandPart>
</feature>
<feature type="binding site" evidence="2">
    <location>
        <position position="154"/>
    </location>
    <ligand>
        <name>L-ascorbate</name>
        <dbReference type="ChEBI" id="CHEBI:38290"/>
    </ligand>
</feature>
<feature type="binding site" description="axial binding residue" evidence="2">
    <location>
        <position position="161"/>
    </location>
    <ligand>
        <name>heme b</name>
        <dbReference type="ChEBI" id="CHEBI:60344"/>
        <label>2</label>
    </ligand>
    <ligandPart>
        <name>Fe</name>
        <dbReference type="ChEBI" id="CHEBI:18248"/>
    </ligandPart>
</feature>
<feature type="binding site" evidence="2">
    <location>
        <position position="182"/>
    </location>
    <ligand>
        <name>heme b</name>
        <dbReference type="ChEBI" id="CHEBI:60344"/>
        <label>1</label>
    </ligand>
</feature>
<feature type="binding site" evidence="2">
    <location>
        <position position="226"/>
    </location>
    <ligand>
        <name>heme b</name>
        <dbReference type="ChEBI" id="CHEBI:60344"/>
        <label>2</label>
    </ligand>
</feature>
<feature type="modified residue" description="N-acetylmethionine" evidence="1">
    <location>
        <position position="1"/>
    </location>
</feature>
<feature type="modified residue" description="Phosphoserine" evidence="3">
    <location>
        <position position="248"/>
    </location>
</feature>
<feature type="modified residue" description="Phosphoserine" evidence="3">
    <location>
        <position position="250"/>
    </location>
</feature>
<sequence length="252" mass="27556">MESPAGRTPAPGALPYYVAFSQLLGLTVVAVTGAWLGAYRGGIAWESALQFNVHPLCMIIGLVFLQGDALLVYRVFRNEAKRTTKILHGLLHVLAFVIALVGLVAVFDYHRKKGIADLYSLHSWCGILVFVLFLAQWLVGLGFFLFPGASFSLRSRYRPQHVFFGAAIFLLSVGTALLGLKEALLFQLGTKYSAFESEGVLANVLGLLLVAFGAVVLYILTRADWKRPLQAEEQALSMDFKTLTEGDSPSSQ</sequence>
<accession>Q95245</accession>
<protein>
    <recommendedName>
        <fullName evidence="6">Transmembrane ascorbate-dependent reductase CYB561</fullName>
        <ecNumber evidence="1">7.2.1.-</ecNumber>
    </recommendedName>
    <alternativeName>
        <fullName>Cytochrome b-561</fullName>
    </alternativeName>
    <alternativeName>
        <fullName>Cytochrome b561</fullName>
    </alternativeName>
</protein>
<dbReference type="EC" id="7.2.1.-" evidence="1"/>
<dbReference type="EMBL" id="D88158">
    <property type="protein sequence ID" value="BAA13549.1"/>
    <property type="molecule type" value="mRNA"/>
</dbReference>
<dbReference type="RefSeq" id="NP_001090991.1">
    <property type="nucleotide sequence ID" value="NM_001097522.1"/>
</dbReference>
<dbReference type="SMR" id="Q95245"/>
<dbReference type="FunCoup" id="Q95245">
    <property type="interactions" value="118"/>
</dbReference>
<dbReference type="STRING" id="9823.ENSSSCP00000073079"/>
<dbReference type="PaxDb" id="9823-ENSSSCP00000018329"/>
<dbReference type="GeneID" id="100048996"/>
<dbReference type="KEGG" id="ssc:100048996"/>
<dbReference type="CTD" id="1534"/>
<dbReference type="eggNOG" id="KOG1619">
    <property type="taxonomic scope" value="Eukaryota"/>
</dbReference>
<dbReference type="InParanoid" id="Q95245"/>
<dbReference type="OrthoDB" id="907479at2759"/>
<dbReference type="Proteomes" id="UP000008227">
    <property type="component" value="Unplaced"/>
</dbReference>
<dbReference type="Proteomes" id="UP000314985">
    <property type="component" value="Unplaced"/>
</dbReference>
<dbReference type="Proteomes" id="UP000694570">
    <property type="component" value="Unplaced"/>
</dbReference>
<dbReference type="Proteomes" id="UP000694571">
    <property type="component" value="Unplaced"/>
</dbReference>
<dbReference type="Proteomes" id="UP000694720">
    <property type="component" value="Unplaced"/>
</dbReference>
<dbReference type="Proteomes" id="UP000694722">
    <property type="component" value="Unplaced"/>
</dbReference>
<dbReference type="Proteomes" id="UP000694723">
    <property type="component" value="Unplaced"/>
</dbReference>
<dbReference type="Proteomes" id="UP000694724">
    <property type="component" value="Unplaced"/>
</dbReference>
<dbReference type="Proteomes" id="UP000694725">
    <property type="component" value="Unplaced"/>
</dbReference>
<dbReference type="Proteomes" id="UP000694726">
    <property type="component" value="Unplaced"/>
</dbReference>
<dbReference type="Proteomes" id="UP000694727">
    <property type="component" value="Unplaced"/>
</dbReference>
<dbReference type="Proteomes" id="UP000694728">
    <property type="component" value="Unplaced"/>
</dbReference>
<dbReference type="GO" id="GO:0042584">
    <property type="term" value="C:chromaffin granule membrane"/>
    <property type="evidence" value="ECO:0000250"/>
    <property type="project" value="UniProtKB"/>
</dbReference>
<dbReference type="GO" id="GO:0005765">
    <property type="term" value="C:lysosomal membrane"/>
    <property type="evidence" value="ECO:0000318"/>
    <property type="project" value="GO_Central"/>
</dbReference>
<dbReference type="GO" id="GO:0046872">
    <property type="term" value="F:metal ion binding"/>
    <property type="evidence" value="ECO:0007669"/>
    <property type="project" value="UniProtKB-KW"/>
</dbReference>
<dbReference type="GO" id="GO:0016491">
    <property type="term" value="F:oxidoreductase activity"/>
    <property type="evidence" value="ECO:0000318"/>
    <property type="project" value="GO_Central"/>
</dbReference>
<dbReference type="GO" id="GO:0140575">
    <property type="term" value="F:transmembrane monodehydroascorbate reductase activity"/>
    <property type="evidence" value="ECO:0000250"/>
    <property type="project" value="UniProtKB"/>
</dbReference>
<dbReference type="GO" id="GO:0140576">
    <property type="term" value="P:ascorbate homeostasis"/>
    <property type="evidence" value="ECO:0000250"/>
    <property type="project" value="UniProtKB"/>
</dbReference>
<dbReference type="FunFam" id="1.20.120.1770:FF:000001">
    <property type="entry name" value="Cytochrome b reductase 1"/>
    <property type="match status" value="1"/>
</dbReference>
<dbReference type="Gene3D" id="1.20.120.1770">
    <property type="match status" value="1"/>
</dbReference>
<dbReference type="InterPro" id="IPR043205">
    <property type="entry name" value="CYB561/CYBRD1-like"/>
</dbReference>
<dbReference type="InterPro" id="IPR006593">
    <property type="entry name" value="Cyt_b561/ferric_Rdtase_TM"/>
</dbReference>
<dbReference type="PANTHER" id="PTHR10106">
    <property type="entry name" value="CYTOCHROME B561-RELATED"/>
    <property type="match status" value="1"/>
</dbReference>
<dbReference type="PANTHER" id="PTHR10106:SF14">
    <property type="entry name" value="TRANSMEMBRANE ASCORBATE-DEPENDENT REDUCTASE CYB561"/>
    <property type="match status" value="1"/>
</dbReference>
<dbReference type="Pfam" id="PF03188">
    <property type="entry name" value="Cytochrom_B561"/>
    <property type="match status" value="1"/>
</dbReference>
<dbReference type="SMART" id="SM00665">
    <property type="entry name" value="B561"/>
    <property type="match status" value="1"/>
</dbReference>
<dbReference type="PROSITE" id="PS50939">
    <property type="entry name" value="CYTOCHROME_B561"/>
    <property type="match status" value="1"/>
</dbReference>
<reference key="1">
    <citation type="journal article" date="1998" name="Biochim. Biophys. Acta">
        <title>Structural basis for the electron transfer across the chromaffin vesicle membranes catalyzed by cytochrome b561: analyses of cDNA nucleotide sequences and visible absorption spectra.</title>
        <authorList>
            <person name="Okuyama E."/>
            <person name="Yamamoto R."/>
            <person name="Ichikawa Y."/>
            <person name="Tsubaki M."/>
        </authorList>
    </citation>
    <scope>NUCLEOTIDE SEQUENCE [MRNA]</scope>
    <source>
        <tissue>Adrenal medulla</tissue>
    </source>
</reference>
<proteinExistence type="evidence at transcript level"/>
<comment type="function">
    <text evidence="1">Transmembrane reductase that uses ascorbate as an electron donor in the cytoplasm and transfers electrons across membranes to reduce monodehydro-L-ascorbate radical in the lumen of secretory vesicles. It is therefore involved the regeneration and homeostasis within secretory vesicles of ascorbate which in turn provides reducing equivalents needed to support the activity of intravesicular enzymes.</text>
</comment>
<comment type="catalytic activity">
    <reaction evidence="1">
        <text>monodehydro-L-ascorbate radical(out) + L-ascorbate(in) = monodehydro-L-ascorbate radical(in) + L-ascorbate(out)</text>
        <dbReference type="Rhea" id="RHEA:66524"/>
        <dbReference type="ChEBI" id="CHEBI:38290"/>
        <dbReference type="ChEBI" id="CHEBI:59513"/>
    </reaction>
    <physiologicalReaction direction="left-to-right" evidence="1">
        <dbReference type="Rhea" id="RHEA:66525"/>
    </physiologicalReaction>
</comment>
<comment type="cofactor">
    <cofactor evidence="1">
        <name>heme b</name>
        <dbReference type="ChEBI" id="CHEBI:60344"/>
    </cofactor>
    <text evidence="1">Binds 2 heme b groups non-covalently.</text>
</comment>
<comment type="subcellular location">
    <subcellularLocation>
        <location evidence="1">Cytoplasmic vesicle</location>
        <location evidence="1">Secretory vesicle</location>
        <location evidence="1">Chromaffin granule membrane</location>
        <topology evidence="2">Multi-pass membrane protein</topology>
    </subcellularLocation>
    <text evidence="1">Secretory vesicle containing catecholamines and amidated peptides.</text>
</comment>
<name>CY561_PIG</name>
<keyword id="KW-0007">Acetylation</keyword>
<keyword id="KW-0968">Cytoplasmic vesicle</keyword>
<keyword id="KW-0249">Electron transport</keyword>
<keyword id="KW-0349">Heme</keyword>
<keyword id="KW-0408">Iron</keyword>
<keyword id="KW-0472">Membrane</keyword>
<keyword id="KW-0479">Metal-binding</keyword>
<keyword id="KW-0597">Phosphoprotein</keyword>
<keyword id="KW-1185">Reference proteome</keyword>
<keyword id="KW-1278">Translocase</keyword>
<keyword id="KW-0812">Transmembrane</keyword>
<keyword id="KW-1133">Transmembrane helix</keyword>
<keyword id="KW-0813">Transport</keyword>
<organism>
    <name type="scientific">Sus scrofa</name>
    <name type="common">Pig</name>
    <dbReference type="NCBI Taxonomy" id="9823"/>
    <lineage>
        <taxon>Eukaryota</taxon>
        <taxon>Metazoa</taxon>
        <taxon>Chordata</taxon>
        <taxon>Craniata</taxon>
        <taxon>Vertebrata</taxon>
        <taxon>Euteleostomi</taxon>
        <taxon>Mammalia</taxon>
        <taxon>Eutheria</taxon>
        <taxon>Laurasiatheria</taxon>
        <taxon>Artiodactyla</taxon>
        <taxon>Suina</taxon>
        <taxon>Suidae</taxon>
        <taxon>Sus</taxon>
    </lineage>
</organism>